<reference key="1">
    <citation type="submission" date="2007-03" db="EMBL/GenBank/DDBJ databases">
        <title>Complete sequence of Shewanella loihica PV-4.</title>
        <authorList>
            <consortium name="US DOE Joint Genome Institute"/>
            <person name="Copeland A."/>
            <person name="Lucas S."/>
            <person name="Lapidus A."/>
            <person name="Barry K."/>
            <person name="Detter J.C."/>
            <person name="Glavina del Rio T."/>
            <person name="Hammon N."/>
            <person name="Israni S."/>
            <person name="Dalin E."/>
            <person name="Tice H."/>
            <person name="Pitluck S."/>
            <person name="Chain P."/>
            <person name="Malfatti S."/>
            <person name="Shin M."/>
            <person name="Vergez L."/>
            <person name="Schmutz J."/>
            <person name="Larimer F."/>
            <person name="Land M."/>
            <person name="Hauser L."/>
            <person name="Kyrpides N."/>
            <person name="Mikhailova N."/>
            <person name="Romine M.F."/>
            <person name="Serres G."/>
            <person name="Fredrickson J."/>
            <person name="Tiedje J."/>
            <person name="Richardson P."/>
        </authorList>
    </citation>
    <scope>NUCLEOTIDE SEQUENCE [LARGE SCALE GENOMIC DNA]</scope>
    <source>
        <strain>ATCC BAA-1088 / PV-4</strain>
    </source>
</reference>
<comment type="function">
    <text evidence="1">Catalyzes the last two sequential reactions in the de novo biosynthetic pathway for UDP-N-acetylglucosamine (UDP-GlcNAc). The C-terminal domain catalyzes the transfer of acetyl group from acetyl coenzyme A to glucosamine-1-phosphate (GlcN-1-P) to produce N-acetylglucosamine-1-phosphate (GlcNAc-1-P), which is converted into UDP-GlcNAc by the transfer of uridine 5-monophosphate (from uridine 5-triphosphate), a reaction catalyzed by the N-terminal domain.</text>
</comment>
<comment type="catalytic activity">
    <reaction evidence="1">
        <text>alpha-D-glucosamine 1-phosphate + acetyl-CoA = N-acetyl-alpha-D-glucosamine 1-phosphate + CoA + H(+)</text>
        <dbReference type="Rhea" id="RHEA:13725"/>
        <dbReference type="ChEBI" id="CHEBI:15378"/>
        <dbReference type="ChEBI" id="CHEBI:57287"/>
        <dbReference type="ChEBI" id="CHEBI:57288"/>
        <dbReference type="ChEBI" id="CHEBI:57776"/>
        <dbReference type="ChEBI" id="CHEBI:58516"/>
        <dbReference type="EC" id="2.3.1.157"/>
    </reaction>
</comment>
<comment type="catalytic activity">
    <reaction evidence="1">
        <text>N-acetyl-alpha-D-glucosamine 1-phosphate + UTP + H(+) = UDP-N-acetyl-alpha-D-glucosamine + diphosphate</text>
        <dbReference type="Rhea" id="RHEA:13509"/>
        <dbReference type="ChEBI" id="CHEBI:15378"/>
        <dbReference type="ChEBI" id="CHEBI:33019"/>
        <dbReference type="ChEBI" id="CHEBI:46398"/>
        <dbReference type="ChEBI" id="CHEBI:57705"/>
        <dbReference type="ChEBI" id="CHEBI:57776"/>
        <dbReference type="EC" id="2.7.7.23"/>
    </reaction>
</comment>
<comment type="cofactor">
    <cofactor evidence="1">
        <name>Mg(2+)</name>
        <dbReference type="ChEBI" id="CHEBI:18420"/>
    </cofactor>
    <text evidence="1">Binds 1 Mg(2+) ion per subunit.</text>
</comment>
<comment type="pathway">
    <text evidence="1">Nucleotide-sugar biosynthesis; UDP-N-acetyl-alpha-D-glucosamine biosynthesis; N-acetyl-alpha-D-glucosamine 1-phosphate from alpha-D-glucosamine 6-phosphate (route II): step 2/2.</text>
</comment>
<comment type="pathway">
    <text evidence="1">Nucleotide-sugar biosynthesis; UDP-N-acetyl-alpha-D-glucosamine biosynthesis; UDP-N-acetyl-alpha-D-glucosamine from N-acetyl-alpha-D-glucosamine 1-phosphate: step 1/1.</text>
</comment>
<comment type="pathway">
    <text evidence="1">Bacterial outer membrane biogenesis; LPS lipid A biosynthesis.</text>
</comment>
<comment type="subunit">
    <text evidence="1">Homotrimer.</text>
</comment>
<comment type="subcellular location">
    <subcellularLocation>
        <location evidence="1">Cytoplasm</location>
    </subcellularLocation>
</comment>
<comment type="similarity">
    <text evidence="1">In the N-terminal section; belongs to the N-acetylglucosamine-1-phosphate uridyltransferase family.</text>
</comment>
<comment type="similarity">
    <text evidence="1">In the C-terminal section; belongs to the transferase hexapeptide repeat family.</text>
</comment>
<evidence type="ECO:0000255" key="1">
    <source>
        <dbReference type="HAMAP-Rule" id="MF_01631"/>
    </source>
</evidence>
<sequence length="454" mass="48040">MALNVVILAAGKGTRMRSDLPKVLHPIAHKSMVQHVIDTAHQLGSEAIQLVYGYGADKLQARLGEQALNWVLQAEQLGTGHAVAQANDNIGDDDTVLILYGDVPLIQVSTLEALLAARDANGLAILTVNLHDPTGYGRIVREAGKVVGIVEQKDANEEQLKINEINTGIMAAPGKQLKAWLGQLSSDNAQGEYYLTDIVAMAHSDGVSITTAQPESAIEVEGANNRVQLAQLERAYQARAAEKLMLEGANLRDPARIDVRGEVTVGMDVMIDVNVVFQGKVTIGNNVTIGAGAILIDCEIGDNAEIKPYSIIENAIVGEAASAGPFARLRPGAELKRDAHIGNFVEMKKAVLGEGSKAGHLAYIGDAQVGAGVNIGAGTITCNYDGANKHLTVIEDDVFVGSDTQLVAPVTIGKGATLGAGSTITRDVAADELVITRVKQRHLTGWTRPVKQKK</sequence>
<name>GLMU_SHELP</name>
<protein>
    <recommendedName>
        <fullName evidence="1">Bifunctional protein GlmU</fullName>
    </recommendedName>
    <domain>
        <recommendedName>
            <fullName evidence="1">UDP-N-acetylglucosamine pyrophosphorylase</fullName>
            <ecNumber evidence="1">2.7.7.23</ecNumber>
        </recommendedName>
        <alternativeName>
            <fullName evidence="1">N-acetylglucosamine-1-phosphate uridyltransferase</fullName>
        </alternativeName>
    </domain>
    <domain>
        <recommendedName>
            <fullName evidence="1">Glucosamine-1-phosphate N-acetyltransferase</fullName>
            <ecNumber evidence="1">2.3.1.157</ecNumber>
        </recommendedName>
    </domain>
</protein>
<keyword id="KW-0012">Acyltransferase</keyword>
<keyword id="KW-0133">Cell shape</keyword>
<keyword id="KW-0961">Cell wall biogenesis/degradation</keyword>
<keyword id="KW-0963">Cytoplasm</keyword>
<keyword id="KW-0460">Magnesium</keyword>
<keyword id="KW-0479">Metal-binding</keyword>
<keyword id="KW-0511">Multifunctional enzyme</keyword>
<keyword id="KW-0548">Nucleotidyltransferase</keyword>
<keyword id="KW-0573">Peptidoglycan synthesis</keyword>
<keyword id="KW-1185">Reference proteome</keyword>
<keyword id="KW-0677">Repeat</keyword>
<keyword id="KW-0808">Transferase</keyword>
<feature type="chain" id="PRO_1000056197" description="Bifunctional protein GlmU">
    <location>
        <begin position="1"/>
        <end position="454"/>
    </location>
</feature>
<feature type="region of interest" description="Pyrophosphorylase" evidence="1">
    <location>
        <begin position="1"/>
        <end position="226"/>
    </location>
</feature>
<feature type="region of interest" description="Linker" evidence="1">
    <location>
        <begin position="227"/>
        <end position="247"/>
    </location>
</feature>
<feature type="region of interest" description="N-acetyltransferase" evidence="1">
    <location>
        <begin position="248"/>
        <end position="454"/>
    </location>
</feature>
<feature type="active site" description="Proton acceptor" evidence="1">
    <location>
        <position position="360"/>
    </location>
</feature>
<feature type="binding site" evidence="1">
    <location>
        <begin position="8"/>
        <end position="11"/>
    </location>
    <ligand>
        <name>UDP-N-acetyl-alpha-D-glucosamine</name>
        <dbReference type="ChEBI" id="CHEBI:57705"/>
    </ligand>
</feature>
<feature type="binding site" evidence="1">
    <location>
        <position position="22"/>
    </location>
    <ligand>
        <name>UDP-N-acetyl-alpha-D-glucosamine</name>
        <dbReference type="ChEBI" id="CHEBI:57705"/>
    </ligand>
</feature>
<feature type="binding site" evidence="1">
    <location>
        <position position="73"/>
    </location>
    <ligand>
        <name>UDP-N-acetyl-alpha-D-glucosamine</name>
        <dbReference type="ChEBI" id="CHEBI:57705"/>
    </ligand>
</feature>
<feature type="binding site" evidence="1">
    <location>
        <begin position="78"/>
        <end position="79"/>
    </location>
    <ligand>
        <name>UDP-N-acetyl-alpha-D-glucosamine</name>
        <dbReference type="ChEBI" id="CHEBI:57705"/>
    </ligand>
</feature>
<feature type="binding site" evidence="1">
    <location>
        <begin position="100"/>
        <end position="102"/>
    </location>
    <ligand>
        <name>UDP-N-acetyl-alpha-D-glucosamine</name>
        <dbReference type="ChEBI" id="CHEBI:57705"/>
    </ligand>
</feature>
<feature type="binding site" evidence="1">
    <location>
        <position position="102"/>
    </location>
    <ligand>
        <name>Mg(2+)</name>
        <dbReference type="ChEBI" id="CHEBI:18420"/>
    </ligand>
</feature>
<feature type="binding site" evidence="1">
    <location>
        <position position="137"/>
    </location>
    <ligand>
        <name>UDP-N-acetyl-alpha-D-glucosamine</name>
        <dbReference type="ChEBI" id="CHEBI:57705"/>
    </ligand>
</feature>
<feature type="binding site" evidence="1">
    <location>
        <position position="151"/>
    </location>
    <ligand>
        <name>UDP-N-acetyl-alpha-D-glucosamine</name>
        <dbReference type="ChEBI" id="CHEBI:57705"/>
    </ligand>
</feature>
<feature type="binding site" evidence="1">
    <location>
        <position position="166"/>
    </location>
    <ligand>
        <name>UDP-N-acetyl-alpha-D-glucosamine</name>
        <dbReference type="ChEBI" id="CHEBI:57705"/>
    </ligand>
</feature>
<feature type="binding site" evidence="1">
    <location>
        <position position="224"/>
    </location>
    <ligand>
        <name>Mg(2+)</name>
        <dbReference type="ChEBI" id="CHEBI:18420"/>
    </ligand>
</feature>
<feature type="binding site" evidence="1">
    <location>
        <position position="224"/>
    </location>
    <ligand>
        <name>UDP-N-acetyl-alpha-D-glucosamine</name>
        <dbReference type="ChEBI" id="CHEBI:57705"/>
    </ligand>
</feature>
<feature type="binding site" evidence="1">
    <location>
        <position position="330"/>
    </location>
    <ligand>
        <name>UDP-N-acetyl-alpha-D-glucosamine</name>
        <dbReference type="ChEBI" id="CHEBI:57705"/>
    </ligand>
</feature>
<feature type="binding site" evidence="1">
    <location>
        <position position="348"/>
    </location>
    <ligand>
        <name>UDP-N-acetyl-alpha-D-glucosamine</name>
        <dbReference type="ChEBI" id="CHEBI:57705"/>
    </ligand>
</feature>
<feature type="binding site" evidence="1">
    <location>
        <position position="363"/>
    </location>
    <ligand>
        <name>UDP-N-acetyl-alpha-D-glucosamine</name>
        <dbReference type="ChEBI" id="CHEBI:57705"/>
    </ligand>
</feature>
<feature type="binding site" evidence="1">
    <location>
        <position position="374"/>
    </location>
    <ligand>
        <name>UDP-N-acetyl-alpha-D-glucosamine</name>
        <dbReference type="ChEBI" id="CHEBI:57705"/>
    </ligand>
</feature>
<feature type="binding site" evidence="1">
    <location>
        <position position="377"/>
    </location>
    <ligand>
        <name>acetyl-CoA</name>
        <dbReference type="ChEBI" id="CHEBI:57288"/>
    </ligand>
</feature>
<feature type="binding site" evidence="1">
    <location>
        <begin position="383"/>
        <end position="384"/>
    </location>
    <ligand>
        <name>acetyl-CoA</name>
        <dbReference type="ChEBI" id="CHEBI:57288"/>
    </ligand>
</feature>
<feature type="binding site" evidence="1">
    <location>
        <position position="402"/>
    </location>
    <ligand>
        <name>acetyl-CoA</name>
        <dbReference type="ChEBI" id="CHEBI:57288"/>
    </ligand>
</feature>
<feature type="binding site" evidence="1">
    <location>
        <position position="420"/>
    </location>
    <ligand>
        <name>acetyl-CoA</name>
        <dbReference type="ChEBI" id="CHEBI:57288"/>
    </ligand>
</feature>
<feature type="binding site" evidence="1">
    <location>
        <position position="437"/>
    </location>
    <ligand>
        <name>acetyl-CoA</name>
        <dbReference type="ChEBI" id="CHEBI:57288"/>
    </ligand>
</feature>
<dbReference type="EC" id="2.7.7.23" evidence="1"/>
<dbReference type="EC" id="2.3.1.157" evidence="1"/>
<dbReference type="EMBL" id="CP000606">
    <property type="protein sequence ID" value="ABO25705.1"/>
    <property type="molecule type" value="Genomic_DNA"/>
</dbReference>
<dbReference type="RefSeq" id="WP_011867633.1">
    <property type="nucleotide sequence ID" value="NC_009092.1"/>
</dbReference>
<dbReference type="SMR" id="A3QJQ7"/>
<dbReference type="STRING" id="323850.Shew_3842"/>
<dbReference type="KEGG" id="slo:Shew_3842"/>
<dbReference type="eggNOG" id="COG1207">
    <property type="taxonomic scope" value="Bacteria"/>
</dbReference>
<dbReference type="HOGENOM" id="CLU_029499_15_2_6"/>
<dbReference type="OrthoDB" id="9775031at2"/>
<dbReference type="UniPathway" id="UPA00113">
    <property type="reaction ID" value="UER00532"/>
</dbReference>
<dbReference type="UniPathway" id="UPA00113">
    <property type="reaction ID" value="UER00533"/>
</dbReference>
<dbReference type="UniPathway" id="UPA00973"/>
<dbReference type="Proteomes" id="UP000001558">
    <property type="component" value="Chromosome"/>
</dbReference>
<dbReference type="GO" id="GO:0005737">
    <property type="term" value="C:cytoplasm"/>
    <property type="evidence" value="ECO:0007669"/>
    <property type="project" value="UniProtKB-SubCell"/>
</dbReference>
<dbReference type="GO" id="GO:0016020">
    <property type="term" value="C:membrane"/>
    <property type="evidence" value="ECO:0007669"/>
    <property type="project" value="GOC"/>
</dbReference>
<dbReference type="GO" id="GO:0019134">
    <property type="term" value="F:glucosamine-1-phosphate N-acetyltransferase activity"/>
    <property type="evidence" value="ECO:0007669"/>
    <property type="project" value="UniProtKB-UniRule"/>
</dbReference>
<dbReference type="GO" id="GO:0000287">
    <property type="term" value="F:magnesium ion binding"/>
    <property type="evidence" value="ECO:0007669"/>
    <property type="project" value="UniProtKB-UniRule"/>
</dbReference>
<dbReference type="GO" id="GO:0003977">
    <property type="term" value="F:UDP-N-acetylglucosamine diphosphorylase activity"/>
    <property type="evidence" value="ECO:0007669"/>
    <property type="project" value="UniProtKB-UniRule"/>
</dbReference>
<dbReference type="GO" id="GO:0000902">
    <property type="term" value="P:cell morphogenesis"/>
    <property type="evidence" value="ECO:0007669"/>
    <property type="project" value="UniProtKB-UniRule"/>
</dbReference>
<dbReference type="GO" id="GO:0071555">
    <property type="term" value="P:cell wall organization"/>
    <property type="evidence" value="ECO:0007669"/>
    <property type="project" value="UniProtKB-KW"/>
</dbReference>
<dbReference type="GO" id="GO:0009245">
    <property type="term" value="P:lipid A biosynthetic process"/>
    <property type="evidence" value="ECO:0007669"/>
    <property type="project" value="UniProtKB-UniRule"/>
</dbReference>
<dbReference type="GO" id="GO:0009252">
    <property type="term" value="P:peptidoglycan biosynthetic process"/>
    <property type="evidence" value="ECO:0007669"/>
    <property type="project" value="UniProtKB-UniRule"/>
</dbReference>
<dbReference type="GO" id="GO:0008360">
    <property type="term" value="P:regulation of cell shape"/>
    <property type="evidence" value="ECO:0007669"/>
    <property type="project" value="UniProtKB-KW"/>
</dbReference>
<dbReference type="GO" id="GO:0006048">
    <property type="term" value="P:UDP-N-acetylglucosamine biosynthetic process"/>
    <property type="evidence" value="ECO:0007669"/>
    <property type="project" value="UniProtKB-UniPathway"/>
</dbReference>
<dbReference type="CDD" id="cd02540">
    <property type="entry name" value="GT2_GlmU_N_bac"/>
    <property type="match status" value="1"/>
</dbReference>
<dbReference type="CDD" id="cd03353">
    <property type="entry name" value="LbH_GlmU_C"/>
    <property type="match status" value="1"/>
</dbReference>
<dbReference type="Gene3D" id="2.160.10.10">
    <property type="entry name" value="Hexapeptide repeat proteins"/>
    <property type="match status" value="1"/>
</dbReference>
<dbReference type="Gene3D" id="3.90.550.10">
    <property type="entry name" value="Spore Coat Polysaccharide Biosynthesis Protein SpsA, Chain A"/>
    <property type="match status" value="1"/>
</dbReference>
<dbReference type="HAMAP" id="MF_01631">
    <property type="entry name" value="GlmU"/>
    <property type="match status" value="1"/>
</dbReference>
<dbReference type="InterPro" id="IPR005882">
    <property type="entry name" value="Bifunctional_GlmU"/>
</dbReference>
<dbReference type="InterPro" id="IPR050065">
    <property type="entry name" value="GlmU-like"/>
</dbReference>
<dbReference type="InterPro" id="IPR038009">
    <property type="entry name" value="GlmU_C_LbH"/>
</dbReference>
<dbReference type="InterPro" id="IPR001451">
    <property type="entry name" value="Hexapep"/>
</dbReference>
<dbReference type="InterPro" id="IPR018357">
    <property type="entry name" value="Hexapep_transf_CS"/>
</dbReference>
<dbReference type="InterPro" id="IPR025877">
    <property type="entry name" value="MobA-like_NTP_Trfase"/>
</dbReference>
<dbReference type="InterPro" id="IPR029044">
    <property type="entry name" value="Nucleotide-diphossugar_trans"/>
</dbReference>
<dbReference type="InterPro" id="IPR011004">
    <property type="entry name" value="Trimer_LpxA-like_sf"/>
</dbReference>
<dbReference type="NCBIfam" id="TIGR01173">
    <property type="entry name" value="glmU"/>
    <property type="match status" value="1"/>
</dbReference>
<dbReference type="NCBIfam" id="NF006986">
    <property type="entry name" value="PRK09451.1"/>
    <property type="match status" value="1"/>
</dbReference>
<dbReference type="PANTHER" id="PTHR43584:SF3">
    <property type="entry name" value="BIFUNCTIONAL PROTEIN GLMU"/>
    <property type="match status" value="1"/>
</dbReference>
<dbReference type="PANTHER" id="PTHR43584">
    <property type="entry name" value="NUCLEOTIDYL TRANSFERASE"/>
    <property type="match status" value="1"/>
</dbReference>
<dbReference type="Pfam" id="PF00132">
    <property type="entry name" value="Hexapep"/>
    <property type="match status" value="2"/>
</dbReference>
<dbReference type="Pfam" id="PF12804">
    <property type="entry name" value="NTP_transf_3"/>
    <property type="match status" value="1"/>
</dbReference>
<dbReference type="SUPFAM" id="SSF53448">
    <property type="entry name" value="Nucleotide-diphospho-sugar transferases"/>
    <property type="match status" value="1"/>
</dbReference>
<dbReference type="SUPFAM" id="SSF51161">
    <property type="entry name" value="Trimeric LpxA-like enzymes"/>
    <property type="match status" value="1"/>
</dbReference>
<dbReference type="PROSITE" id="PS00101">
    <property type="entry name" value="HEXAPEP_TRANSFERASES"/>
    <property type="match status" value="1"/>
</dbReference>
<gene>
    <name evidence="1" type="primary">glmU</name>
    <name type="ordered locus">Shew_3842</name>
</gene>
<organism>
    <name type="scientific">Shewanella loihica (strain ATCC BAA-1088 / PV-4)</name>
    <dbReference type="NCBI Taxonomy" id="323850"/>
    <lineage>
        <taxon>Bacteria</taxon>
        <taxon>Pseudomonadati</taxon>
        <taxon>Pseudomonadota</taxon>
        <taxon>Gammaproteobacteria</taxon>
        <taxon>Alteromonadales</taxon>
        <taxon>Shewanellaceae</taxon>
        <taxon>Shewanella</taxon>
    </lineage>
</organism>
<proteinExistence type="inferred from homology"/>
<accession>A3QJQ7</accession>